<gene>
    <name evidence="1" type="primary">nadK</name>
    <name type="ordered locus">LPC_3110</name>
</gene>
<name>NADK_LEGPC</name>
<dbReference type="EC" id="2.7.1.23" evidence="1"/>
<dbReference type="EMBL" id="CP000675">
    <property type="protein sequence ID" value="ABQ56997.1"/>
    <property type="molecule type" value="Genomic_DNA"/>
</dbReference>
<dbReference type="RefSeq" id="WP_011947709.1">
    <property type="nucleotide sequence ID" value="NZ_JAPMSS010000004.1"/>
</dbReference>
<dbReference type="SMR" id="A5IHZ7"/>
<dbReference type="KEGG" id="lpc:LPC_3110"/>
<dbReference type="HOGENOM" id="CLU_008831_0_1_6"/>
<dbReference type="GO" id="GO:0005737">
    <property type="term" value="C:cytoplasm"/>
    <property type="evidence" value="ECO:0007669"/>
    <property type="project" value="UniProtKB-SubCell"/>
</dbReference>
<dbReference type="GO" id="GO:0005524">
    <property type="term" value="F:ATP binding"/>
    <property type="evidence" value="ECO:0007669"/>
    <property type="project" value="UniProtKB-KW"/>
</dbReference>
<dbReference type="GO" id="GO:0046872">
    <property type="term" value="F:metal ion binding"/>
    <property type="evidence" value="ECO:0007669"/>
    <property type="project" value="UniProtKB-UniRule"/>
</dbReference>
<dbReference type="GO" id="GO:0051287">
    <property type="term" value="F:NAD binding"/>
    <property type="evidence" value="ECO:0007669"/>
    <property type="project" value="UniProtKB-ARBA"/>
</dbReference>
<dbReference type="GO" id="GO:0003951">
    <property type="term" value="F:NAD+ kinase activity"/>
    <property type="evidence" value="ECO:0007669"/>
    <property type="project" value="UniProtKB-UniRule"/>
</dbReference>
<dbReference type="GO" id="GO:0019674">
    <property type="term" value="P:NAD metabolic process"/>
    <property type="evidence" value="ECO:0007669"/>
    <property type="project" value="InterPro"/>
</dbReference>
<dbReference type="GO" id="GO:0006741">
    <property type="term" value="P:NADP biosynthetic process"/>
    <property type="evidence" value="ECO:0007669"/>
    <property type="project" value="UniProtKB-UniRule"/>
</dbReference>
<dbReference type="FunFam" id="2.60.200.30:FF:000009">
    <property type="entry name" value="Poly(P)/ATP NAD kinase"/>
    <property type="match status" value="1"/>
</dbReference>
<dbReference type="Gene3D" id="3.40.50.10330">
    <property type="entry name" value="Probable inorganic polyphosphate/atp-NAD kinase, domain 1"/>
    <property type="match status" value="1"/>
</dbReference>
<dbReference type="Gene3D" id="2.60.200.30">
    <property type="entry name" value="Probable inorganic polyphosphate/atp-NAD kinase, domain 2"/>
    <property type="match status" value="1"/>
</dbReference>
<dbReference type="HAMAP" id="MF_00361">
    <property type="entry name" value="NAD_kinase"/>
    <property type="match status" value="1"/>
</dbReference>
<dbReference type="InterPro" id="IPR017438">
    <property type="entry name" value="ATP-NAD_kinase_N"/>
</dbReference>
<dbReference type="InterPro" id="IPR017437">
    <property type="entry name" value="ATP-NAD_kinase_PpnK-typ_C"/>
</dbReference>
<dbReference type="InterPro" id="IPR016064">
    <property type="entry name" value="NAD/diacylglycerol_kinase_sf"/>
</dbReference>
<dbReference type="InterPro" id="IPR002504">
    <property type="entry name" value="NADK"/>
</dbReference>
<dbReference type="NCBIfam" id="NF002306">
    <property type="entry name" value="PRK01231.1"/>
    <property type="match status" value="1"/>
</dbReference>
<dbReference type="PANTHER" id="PTHR20275">
    <property type="entry name" value="NAD KINASE"/>
    <property type="match status" value="1"/>
</dbReference>
<dbReference type="PANTHER" id="PTHR20275:SF0">
    <property type="entry name" value="NAD KINASE"/>
    <property type="match status" value="1"/>
</dbReference>
<dbReference type="Pfam" id="PF01513">
    <property type="entry name" value="NAD_kinase"/>
    <property type="match status" value="1"/>
</dbReference>
<dbReference type="Pfam" id="PF20143">
    <property type="entry name" value="NAD_kinase_C"/>
    <property type="match status" value="1"/>
</dbReference>
<dbReference type="SUPFAM" id="SSF111331">
    <property type="entry name" value="NAD kinase/diacylglycerol kinase-like"/>
    <property type="match status" value="1"/>
</dbReference>
<sequence>MKQKFKRAILYARQHRANQEVNESLHRLVDFLSTQDIEIFQDSDTAASFELKTPVLPREKMGEKHDLIIVVGGDGSLLSASRMAIKVNTPVIGINRGRLGFLTDILPQDIESHLGPVLNGQYNEEERFLLHTKIYDKENSYFEGDALNDVVLGRGSETHLIEFDVYINQQLVSHYRSDGMILSTPTGSTAYALSAGGPIMHPQLNAIVLVPMFSHSLSSRPLVIDGEAEIELYISKSNETDLRISCDGHESRVVKPGQKVAVKKNGNRLRLLHPLDYHYYDTLRSKLGWESKHQG</sequence>
<keyword id="KW-0067">ATP-binding</keyword>
<keyword id="KW-0963">Cytoplasm</keyword>
<keyword id="KW-0418">Kinase</keyword>
<keyword id="KW-0520">NAD</keyword>
<keyword id="KW-0521">NADP</keyword>
<keyword id="KW-0547">Nucleotide-binding</keyword>
<keyword id="KW-0808">Transferase</keyword>
<evidence type="ECO:0000255" key="1">
    <source>
        <dbReference type="HAMAP-Rule" id="MF_00361"/>
    </source>
</evidence>
<feature type="chain" id="PRO_1000005420" description="NAD kinase">
    <location>
        <begin position="1"/>
        <end position="295"/>
    </location>
</feature>
<feature type="active site" description="Proton acceptor" evidence="1">
    <location>
        <position position="74"/>
    </location>
</feature>
<feature type="binding site" evidence="1">
    <location>
        <begin position="74"/>
        <end position="75"/>
    </location>
    <ligand>
        <name>NAD(+)</name>
        <dbReference type="ChEBI" id="CHEBI:57540"/>
    </ligand>
</feature>
<feature type="binding site" evidence="1">
    <location>
        <begin position="148"/>
        <end position="149"/>
    </location>
    <ligand>
        <name>NAD(+)</name>
        <dbReference type="ChEBI" id="CHEBI:57540"/>
    </ligand>
</feature>
<feature type="binding site" evidence="1">
    <location>
        <position position="159"/>
    </location>
    <ligand>
        <name>NAD(+)</name>
        <dbReference type="ChEBI" id="CHEBI:57540"/>
    </ligand>
</feature>
<feature type="binding site" evidence="1">
    <location>
        <position position="176"/>
    </location>
    <ligand>
        <name>NAD(+)</name>
        <dbReference type="ChEBI" id="CHEBI:57540"/>
    </ligand>
</feature>
<feature type="binding site" evidence="1">
    <location>
        <position position="178"/>
    </location>
    <ligand>
        <name>NAD(+)</name>
        <dbReference type="ChEBI" id="CHEBI:57540"/>
    </ligand>
</feature>
<feature type="binding site" evidence="1">
    <location>
        <begin position="189"/>
        <end position="194"/>
    </location>
    <ligand>
        <name>NAD(+)</name>
        <dbReference type="ChEBI" id="CHEBI:57540"/>
    </ligand>
</feature>
<proteinExistence type="inferred from homology"/>
<reference key="1">
    <citation type="submission" date="2006-11" db="EMBL/GenBank/DDBJ databases">
        <title>Identification and characterization of a new conjugation/ type IVA secretion system (trb/tra) of L. pneumophila Corby localized on a mobile genomic island.</title>
        <authorList>
            <person name="Gloeckner G."/>
            <person name="Albert-Weissenberger C."/>
            <person name="Weinmann E."/>
            <person name="Jacobi S."/>
            <person name="Schunder E."/>
            <person name="Steinert M."/>
            <person name="Buchrieser C."/>
            <person name="Hacker J."/>
            <person name="Heuner K."/>
        </authorList>
    </citation>
    <scope>NUCLEOTIDE SEQUENCE [LARGE SCALE GENOMIC DNA]</scope>
    <source>
        <strain>Corby</strain>
    </source>
</reference>
<comment type="function">
    <text evidence="1">Involved in the regulation of the intracellular balance of NAD and NADP, and is a key enzyme in the biosynthesis of NADP. Catalyzes specifically the phosphorylation on 2'-hydroxyl of the adenosine moiety of NAD to yield NADP.</text>
</comment>
<comment type="catalytic activity">
    <reaction evidence="1">
        <text>NAD(+) + ATP = ADP + NADP(+) + H(+)</text>
        <dbReference type="Rhea" id="RHEA:18629"/>
        <dbReference type="ChEBI" id="CHEBI:15378"/>
        <dbReference type="ChEBI" id="CHEBI:30616"/>
        <dbReference type="ChEBI" id="CHEBI:57540"/>
        <dbReference type="ChEBI" id="CHEBI:58349"/>
        <dbReference type="ChEBI" id="CHEBI:456216"/>
        <dbReference type="EC" id="2.7.1.23"/>
    </reaction>
</comment>
<comment type="cofactor">
    <cofactor evidence="1">
        <name>a divalent metal cation</name>
        <dbReference type="ChEBI" id="CHEBI:60240"/>
    </cofactor>
</comment>
<comment type="subcellular location">
    <subcellularLocation>
        <location evidence="1">Cytoplasm</location>
    </subcellularLocation>
</comment>
<comment type="similarity">
    <text evidence="1">Belongs to the NAD kinase family.</text>
</comment>
<protein>
    <recommendedName>
        <fullName evidence="1">NAD kinase</fullName>
        <ecNumber evidence="1">2.7.1.23</ecNumber>
    </recommendedName>
    <alternativeName>
        <fullName evidence="1">ATP-dependent NAD kinase</fullName>
    </alternativeName>
</protein>
<accession>A5IHZ7</accession>
<organism>
    <name type="scientific">Legionella pneumophila (strain Corby)</name>
    <dbReference type="NCBI Taxonomy" id="400673"/>
    <lineage>
        <taxon>Bacteria</taxon>
        <taxon>Pseudomonadati</taxon>
        <taxon>Pseudomonadota</taxon>
        <taxon>Gammaproteobacteria</taxon>
        <taxon>Legionellales</taxon>
        <taxon>Legionellaceae</taxon>
        <taxon>Legionella</taxon>
    </lineage>
</organism>